<evidence type="ECO:0000255" key="1">
    <source>
        <dbReference type="HAMAP-Rule" id="MF_01813"/>
    </source>
</evidence>
<protein>
    <recommendedName>
        <fullName evidence="1">Ubiquinone/menaquinone biosynthesis C-methyltransferase UbiE</fullName>
        <ecNumber evidence="1">2.1.1.163</ecNumber>
        <ecNumber evidence="1">2.1.1.201</ecNumber>
    </recommendedName>
    <alternativeName>
        <fullName evidence="1">2-methoxy-6-polyprenyl-1,4-benzoquinol methylase</fullName>
    </alternativeName>
    <alternativeName>
        <fullName evidence="1">Demethylmenaquinone methyltransferase</fullName>
    </alternativeName>
</protein>
<gene>
    <name evidence="1" type="primary">ubiE</name>
    <name type="ordered locus">A1G_05735</name>
</gene>
<reference key="1">
    <citation type="submission" date="2007-09" db="EMBL/GenBank/DDBJ databases">
        <title>Complete genome sequence of Rickettsia rickettsii.</title>
        <authorList>
            <person name="Madan A."/>
            <person name="Fahey J."/>
            <person name="Helton E."/>
            <person name="Ketteman M."/>
            <person name="Madan A."/>
            <person name="Rodrigues S."/>
            <person name="Sanchez A."/>
            <person name="Dasch G."/>
            <person name="Eremeeva M."/>
        </authorList>
    </citation>
    <scope>NUCLEOTIDE SEQUENCE [LARGE SCALE GENOMIC DNA]</scope>
    <source>
        <strain>Sheila Smith</strain>
    </source>
</reference>
<keyword id="KW-0474">Menaquinone biosynthesis</keyword>
<keyword id="KW-0489">Methyltransferase</keyword>
<keyword id="KW-0949">S-adenosyl-L-methionine</keyword>
<keyword id="KW-0808">Transferase</keyword>
<keyword id="KW-0831">Ubiquinone biosynthesis</keyword>
<sequence>MNQTNFGFKKVDYTKKQGLVNNVFSNVADKYDLMNDLMSLGLHRLWKDEFIRQIPNLNSHILDVASGSGDIALKLAKKARDRVNNISLTLSDINEEMLKQAKKKAIDLNLFQNLKFTVASAEELPFPDDSFDYYTIAFGIRNVPDINKALKEACRVLKPMGKFICLEFSKVKEGYIKDFYKFYSFNIIPSIGQMIAGNKEAYEYLVESIDLFPSQDEFRIMIKDAGFEEVGYKNLSGGIVAIHSAYTR</sequence>
<accession>A8GT99</accession>
<feature type="chain" id="PRO_1000056288" description="Ubiquinone/menaquinone biosynthesis C-methyltransferase UbiE">
    <location>
        <begin position="1"/>
        <end position="248"/>
    </location>
</feature>
<feature type="binding site" evidence="1">
    <location>
        <position position="68"/>
    </location>
    <ligand>
        <name>S-adenosyl-L-methionine</name>
        <dbReference type="ChEBI" id="CHEBI:59789"/>
    </ligand>
</feature>
<feature type="binding site" evidence="1">
    <location>
        <position position="92"/>
    </location>
    <ligand>
        <name>S-adenosyl-L-methionine</name>
        <dbReference type="ChEBI" id="CHEBI:59789"/>
    </ligand>
</feature>
<name>UBIE_RICRS</name>
<comment type="function">
    <text evidence="1">Methyltransferase required for the conversion of demethylmenaquinol (DMKH2) to menaquinol (MKH2) and the conversion of 2-polyprenyl-6-methoxy-1,4-benzoquinol (DDMQH2) to 2-polyprenyl-3-methyl-6-methoxy-1,4-benzoquinol (DMQH2).</text>
</comment>
<comment type="catalytic activity">
    <reaction evidence="1">
        <text>a 2-demethylmenaquinol + S-adenosyl-L-methionine = a menaquinol + S-adenosyl-L-homocysteine + H(+)</text>
        <dbReference type="Rhea" id="RHEA:42640"/>
        <dbReference type="Rhea" id="RHEA-COMP:9539"/>
        <dbReference type="Rhea" id="RHEA-COMP:9563"/>
        <dbReference type="ChEBI" id="CHEBI:15378"/>
        <dbReference type="ChEBI" id="CHEBI:18151"/>
        <dbReference type="ChEBI" id="CHEBI:55437"/>
        <dbReference type="ChEBI" id="CHEBI:57856"/>
        <dbReference type="ChEBI" id="CHEBI:59789"/>
        <dbReference type="EC" id="2.1.1.163"/>
    </reaction>
</comment>
<comment type="catalytic activity">
    <reaction evidence="1">
        <text>a 2-methoxy-6-(all-trans-polyprenyl)benzene-1,4-diol + S-adenosyl-L-methionine = a 5-methoxy-2-methyl-3-(all-trans-polyprenyl)benzene-1,4-diol + S-adenosyl-L-homocysteine + H(+)</text>
        <dbReference type="Rhea" id="RHEA:28286"/>
        <dbReference type="Rhea" id="RHEA-COMP:10858"/>
        <dbReference type="Rhea" id="RHEA-COMP:10859"/>
        <dbReference type="ChEBI" id="CHEBI:15378"/>
        <dbReference type="ChEBI" id="CHEBI:57856"/>
        <dbReference type="ChEBI" id="CHEBI:59789"/>
        <dbReference type="ChEBI" id="CHEBI:84166"/>
        <dbReference type="ChEBI" id="CHEBI:84167"/>
        <dbReference type="EC" id="2.1.1.201"/>
    </reaction>
</comment>
<comment type="pathway">
    <text evidence="1">Quinol/quinone metabolism; menaquinone biosynthesis; menaquinol from 1,4-dihydroxy-2-naphthoate: step 2/2.</text>
</comment>
<comment type="pathway">
    <text evidence="1">Cofactor biosynthesis; ubiquinone biosynthesis.</text>
</comment>
<comment type="similarity">
    <text evidence="1">Belongs to the class I-like SAM-binding methyltransferase superfamily. MenG/UbiE family.</text>
</comment>
<dbReference type="EC" id="2.1.1.163" evidence="1"/>
<dbReference type="EC" id="2.1.1.201" evidence="1"/>
<dbReference type="EMBL" id="CP000848">
    <property type="protein sequence ID" value="ABV76624.1"/>
    <property type="molecule type" value="Genomic_DNA"/>
</dbReference>
<dbReference type="RefSeq" id="WP_012151179.1">
    <property type="nucleotide sequence ID" value="NZ_CP121767.1"/>
</dbReference>
<dbReference type="SMR" id="A8GT99"/>
<dbReference type="GeneID" id="79937701"/>
<dbReference type="KEGG" id="rri:A1G_05735"/>
<dbReference type="HOGENOM" id="CLU_037990_0_1_5"/>
<dbReference type="UniPathway" id="UPA00079">
    <property type="reaction ID" value="UER00169"/>
</dbReference>
<dbReference type="UniPathway" id="UPA00232"/>
<dbReference type="Proteomes" id="UP000006832">
    <property type="component" value="Chromosome"/>
</dbReference>
<dbReference type="GO" id="GO:0008425">
    <property type="term" value="F:2-methoxy-6-polyprenyl-1,4-benzoquinol methyltransferase activity"/>
    <property type="evidence" value="ECO:0007669"/>
    <property type="project" value="UniProtKB-UniRule"/>
</dbReference>
<dbReference type="GO" id="GO:0043770">
    <property type="term" value="F:demethylmenaquinone methyltransferase activity"/>
    <property type="evidence" value="ECO:0007669"/>
    <property type="project" value="UniProtKB-UniRule"/>
</dbReference>
<dbReference type="GO" id="GO:0009060">
    <property type="term" value="P:aerobic respiration"/>
    <property type="evidence" value="ECO:0007669"/>
    <property type="project" value="UniProtKB-UniRule"/>
</dbReference>
<dbReference type="GO" id="GO:0009234">
    <property type="term" value="P:menaquinone biosynthetic process"/>
    <property type="evidence" value="ECO:0007669"/>
    <property type="project" value="UniProtKB-UniRule"/>
</dbReference>
<dbReference type="GO" id="GO:0032259">
    <property type="term" value="P:methylation"/>
    <property type="evidence" value="ECO:0007669"/>
    <property type="project" value="UniProtKB-KW"/>
</dbReference>
<dbReference type="CDD" id="cd02440">
    <property type="entry name" value="AdoMet_MTases"/>
    <property type="match status" value="1"/>
</dbReference>
<dbReference type="FunFam" id="3.40.50.150:FF:000250">
    <property type="entry name" value="Ubiquinone/menaquinone biosynthesis C-methyltransferase UbiE"/>
    <property type="match status" value="1"/>
</dbReference>
<dbReference type="Gene3D" id="3.40.50.150">
    <property type="entry name" value="Vaccinia Virus protein VP39"/>
    <property type="match status" value="1"/>
</dbReference>
<dbReference type="HAMAP" id="MF_01813">
    <property type="entry name" value="MenG_UbiE_methyltr"/>
    <property type="match status" value="1"/>
</dbReference>
<dbReference type="InterPro" id="IPR029063">
    <property type="entry name" value="SAM-dependent_MTases_sf"/>
</dbReference>
<dbReference type="InterPro" id="IPR004033">
    <property type="entry name" value="UbiE/COQ5_MeTrFase"/>
</dbReference>
<dbReference type="InterPro" id="IPR023576">
    <property type="entry name" value="UbiE/COQ5_MeTrFase_CS"/>
</dbReference>
<dbReference type="NCBIfam" id="TIGR01934">
    <property type="entry name" value="MenG_MenH_UbiE"/>
    <property type="match status" value="1"/>
</dbReference>
<dbReference type="NCBIfam" id="NF001242">
    <property type="entry name" value="PRK00216.1-3"/>
    <property type="match status" value="1"/>
</dbReference>
<dbReference type="NCBIfam" id="NF001244">
    <property type="entry name" value="PRK00216.1-5"/>
    <property type="match status" value="1"/>
</dbReference>
<dbReference type="PANTHER" id="PTHR43591:SF24">
    <property type="entry name" value="2-METHOXY-6-POLYPRENYL-1,4-BENZOQUINOL METHYLASE, MITOCHONDRIAL"/>
    <property type="match status" value="1"/>
</dbReference>
<dbReference type="PANTHER" id="PTHR43591">
    <property type="entry name" value="METHYLTRANSFERASE"/>
    <property type="match status" value="1"/>
</dbReference>
<dbReference type="Pfam" id="PF01209">
    <property type="entry name" value="Ubie_methyltran"/>
    <property type="match status" value="1"/>
</dbReference>
<dbReference type="SUPFAM" id="SSF53335">
    <property type="entry name" value="S-adenosyl-L-methionine-dependent methyltransferases"/>
    <property type="match status" value="1"/>
</dbReference>
<dbReference type="PROSITE" id="PS51608">
    <property type="entry name" value="SAM_MT_UBIE"/>
    <property type="match status" value="1"/>
</dbReference>
<dbReference type="PROSITE" id="PS01183">
    <property type="entry name" value="UBIE_1"/>
    <property type="match status" value="1"/>
</dbReference>
<dbReference type="PROSITE" id="PS01184">
    <property type="entry name" value="UBIE_2"/>
    <property type="match status" value="1"/>
</dbReference>
<organism>
    <name type="scientific">Rickettsia rickettsii (strain Sheila Smith)</name>
    <dbReference type="NCBI Taxonomy" id="392021"/>
    <lineage>
        <taxon>Bacteria</taxon>
        <taxon>Pseudomonadati</taxon>
        <taxon>Pseudomonadota</taxon>
        <taxon>Alphaproteobacteria</taxon>
        <taxon>Rickettsiales</taxon>
        <taxon>Rickettsiaceae</taxon>
        <taxon>Rickettsieae</taxon>
        <taxon>Rickettsia</taxon>
        <taxon>spotted fever group</taxon>
    </lineage>
</organism>
<proteinExistence type="inferred from homology"/>